<comment type="function">
    <text evidence="4 5 6 8">Chi-conotoxins inhibit the neuronal noradrenaline transporter (NET/SLC6A2) (PubMed:11528421, PubMed:12837768, PubMed:12885787, PubMed:16154696). Activity has been described on both human (inhibition of norepinephrine uptake is IC(50)=1.26 uM) and rat (pIC(50)=6.21 corresponding IC(50)=0.16 uM) transporters (PubMed:11528421, PubMed:12885787). Acts as a reversible non-competitive inhibitor (PubMed:11528421).</text>
</comment>
<comment type="subcellular location">
    <subcellularLocation>
        <location evidence="2 3">Secreted</location>
    </subcellularLocation>
</comment>
<comment type="tissue specificity">
    <text evidence="21 22">Expressed by the venom duct.</text>
</comment>
<comment type="domain">
    <text evidence="20">The cysteine framework is X (CC-CX[hydroxyPro]C).</text>
</comment>
<comment type="mass spectrometry"/>
<comment type="mass spectrometry"/>
<comment type="mass spectrometry"/>
<comment type="miscellaneous">
    <text>Exists in two forms, due to cis-trans isomerization at 59-His-Hyp-60.</text>
</comment>
<comment type="miscellaneous">
    <text evidence="9 10 24">Failed in phase II clinical trial by Xenome under the name Xen2174. This structural analog of MrIA was developed to overcome the relatively poor chemical stability of Mr1A in solution. Initially intended for treating neuropathic pain, the promising results observed on rat transporters did not translate when tested on human transporters.</text>
</comment>
<comment type="miscellaneous">
    <text evidence="23">Negative results: does not produce effects on the activity of the dopamine transporter (DAT/SLC6A3) and the serotonin transporter (SERT/SLC6A4).</text>
</comment>
<comment type="similarity">
    <text evidence="20">Belongs to the conotoxin T superfamily.</text>
</comment>
<keyword id="KW-0002">3D-structure</keyword>
<keyword id="KW-0903">Direct protein sequencing</keyword>
<keyword id="KW-1015">Disulfide bond</keyword>
<keyword id="KW-0379">Hydroxylation</keyword>
<keyword id="KW-0528">Neurotoxin</keyword>
<keyword id="KW-0964">Secreted</keyword>
<keyword id="KW-0732">Signal</keyword>
<keyword id="KW-0800">Toxin</keyword>
<name>CTA1A_CONMR</name>
<sequence>MRCLPVLIILLLLTASAPGVVVLPKTEDDVPMSSVYGNGKSILRGILRNGVCCGYKLCHPC</sequence>
<accession>P58808</accession>
<accession>D6C4H0</accession>
<accession>Q3YEG8</accession>
<reference key="1">
    <citation type="journal article" date="2000" name="J. Biol. Chem.">
        <title>Isolation and characterization of a novel conus peptide with apparent antinociceptive activity.</title>
        <authorList>
            <person name="McIntosh J.M."/>
            <person name="Corpuz G.O."/>
            <person name="Layer R.T."/>
            <person name="Garrett J.E."/>
            <person name="Wagstaff J.D."/>
            <person name="Bulaj G."/>
            <person name="Vyazovkina A."/>
            <person name="Yoshikami D."/>
            <person name="Cruz L.J."/>
            <person name="Olivera B.M."/>
        </authorList>
    </citation>
    <scope>NUCLEOTIDE SEQUENCE [MRNA]</scope>
    <scope>PROTEIN SEQUENCE OF 49-61</scope>
    <scope>SYNTHESIS OF 49-61</scope>
    <scope>MASS SPECTROMETRY</scope>
    <scope>SUBCELLULAR LOCATION</scope>
    <source>
        <tissue>Venom</tissue>
        <tissue>Venom duct</tissue>
    </source>
</reference>
<reference key="2">
    <citation type="submission" date="2005-07" db="EMBL/GenBank/DDBJ databases">
        <title>Novel T-superfamily conotoxins, and their coding polynucleotides and use.</title>
        <authorList>
            <person name="Luo S."/>
            <person name="Zhangsun D."/>
            <person name="Zhang B."/>
            <person name="Chen X."/>
        </authorList>
    </citation>
    <scope>NUCLEOTIDE SEQUENCE [MRNA]</scope>
</reference>
<reference key="3">
    <citation type="journal article" date="2010" name="Mol. Phylogenet. Evol.">
        <title>Evolution of Conus peptide toxins: analysis of Conus californicus Reeve, 1844.</title>
        <authorList>
            <person name="Biggs J.S."/>
            <person name="Watkins M."/>
            <person name="Puillandre N."/>
            <person name="Ownby J.P."/>
            <person name="Lopez-Vera E."/>
            <person name="Christensen S."/>
            <person name="Moreno K.J."/>
            <person name="Bernaldez J."/>
            <person name="Licea-Navarro A."/>
            <person name="Corneli P.S."/>
            <person name="Olivera B.M."/>
        </authorList>
    </citation>
    <scope>NUCLEOTIDE SEQUENCE [GENOMIC DNA]</scope>
</reference>
<reference key="4">
    <citation type="journal article" date="2000" name="J. Biol. Chem.">
        <title>Lambda-conotoxins, a new family of conotoxins with unique disulfide pattern and protein folding. Isolation and characterization from the venom of Conus marmoreus.</title>
        <authorList>
            <person name="Balaji R.A."/>
            <person name="Ohtake A."/>
            <person name="Sato K."/>
            <person name="Gopalakrishnakone P."/>
            <person name="Kini R.M."/>
            <person name="Seow K.T."/>
            <person name="Bay B.-H."/>
        </authorList>
    </citation>
    <scope>PROTEIN SEQUENCE OF 49-61</scope>
    <scope>MASS SPECTROMETRY</scope>
    <scope>SUBCELLULAR LOCATION</scope>
    <source>
        <tissue>Venom</tissue>
    </source>
</reference>
<reference key="5">
    <citation type="journal article" date="2001" name="Nat. Neurosci.">
        <title>Two new classes of conopeptides inhibit the alpha1-adrenoceptor and noradrenaline transporter.</title>
        <authorList>
            <person name="Sharpe I.A."/>
            <person name="Gehrmann J."/>
            <person name="Loughnan M.L."/>
            <person name="Thomas L."/>
            <person name="Adams D.A."/>
            <person name="Atkins A."/>
            <person name="Palant E."/>
            <person name="Craik D.J."/>
            <person name="Adams D.J."/>
            <person name="Alewood P.F."/>
            <person name="Lewis R.J."/>
        </authorList>
    </citation>
    <scope>PROTEIN SEQUENCE OF 49-61</scope>
    <scope>SYNTHESIS OF 49-61</scope>
    <scope>FUNCTION</scope>
    <scope>MASS SPECTROMETRY</scope>
    <scope>STRUCTURE BY NMR OF 49-61</scope>
    <scope>DISULFIDE BONDS</scope>
    <source>
        <tissue>Venom</tissue>
    </source>
</reference>
<reference key="6">
    <citation type="journal article" date="2003" name="J. Biol. Chem.">
        <title>Inhibition of the norepinephrine transporter by the venom peptide chi-MrIA. Site of action, Na+ dependence, and structure-activity relationship.</title>
        <authorList>
            <person name="Sharpe I.A."/>
            <person name="Palant E."/>
            <person name="Schroeder C.I."/>
            <person name="Kaye D.M."/>
            <person name="Adams D.J."/>
            <person name="Alewood P.F."/>
            <person name="Lewis R.J."/>
        </authorList>
    </citation>
    <scope>FUNCTION</scope>
    <scope>SYNTHESIS OF 49-61</scope>
</reference>
<reference key="7">
    <citation type="journal article" date="2003" name="J. Biol. Chem.">
        <title>Chi-conopeptide MrIA partially overlaps desipramine and cocaine binding sites on the human norepinephrine transporter.</title>
        <authorList>
            <person name="Bryan-Lluka L.J."/>
            <person name="Bonisch H."/>
            <person name="Lewis R.J."/>
        </authorList>
    </citation>
    <scope>FUNCTION</scope>
</reference>
<reference key="8">
    <citation type="journal article" date="2005" name="Pain">
        <title>Anti-allodynic efficacy of the chi-conopeptide, Xen2174, in rats with neuropathic pain.</title>
        <authorList>
            <person name="Nielsen C.K."/>
            <person name="Lewis R.J."/>
            <person name="Alewood D."/>
            <person name="Drinkwater R."/>
            <person name="Palant E."/>
            <person name="Patterson M."/>
            <person name="Yaksh T.L."/>
            <person name="McCumber D."/>
            <person name="Smith M.T."/>
        </authorList>
    </citation>
    <scope>FUNCTION</scope>
    <scope>TESTED AS DRUG</scope>
</reference>
<reference evidence="25" key="9">
    <citation type="journal article" date="2005" name="Biopolymers">
        <title>Solution structure of chi-conopeptide MrIA, a modulator of the human norepinephrine transporter.</title>
        <authorList>
            <person name="Nilsson K.P.R."/>
            <person name="Lovelace E.S."/>
            <person name="Caesar C.E."/>
            <person name="Tynngard N."/>
            <person name="Alewood P.F."/>
            <person name="Johansson H.M."/>
            <person name="Sharpe I.A."/>
            <person name="Lewis R.J."/>
            <person name="Daly N.L."/>
            <person name="Craik D.J."/>
        </authorList>
    </citation>
    <scope>STRUCTURE BY NMR OF 49-61</scope>
    <scope>SYNTHESIS OF 49-61</scope>
    <scope>DISULFIDE BONDS</scope>
    <scope>HYDROXYLATION AT PRO-60</scope>
</reference>
<reference key="10">
    <citation type="journal article" date="2012" name="Toxicon">
        <title>Discovery and development of the chi-conopeptide class of analgesic peptides.</title>
        <authorList>
            <person name="Lewis R.J."/>
        </authorList>
    </citation>
    <scope>TESTED AS DRUG</scope>
</reference>
<reference key="11">
    <citation type="journal article" date="2017" name="Br. J. Clin. Pharmacol.">
        <title>Pharmacokinetics and pharmacodynamics of intrathecally administered Xen2174, a synthetic conopeptide with norepinephrine reuptake inhibitor and analgesic properties.</title>
        <authorList>
            <person name="Okkerse P."/>
            <person name="Hay J.L."/>
            <person name="Sitsen E."/>
            <person name="Dahan A."/>
            <person name="Klaassen E."/>
            <person name="Houghton W."/>
            <person name="Groeneveld G.J."/>
        </authorList>
    </citation>
    <scope>TESTED AS DRUG</scope>
</reference>
<reference key="12">
    <citation type="journal article" date="2023" name="Mar. Drugs">
        <title>Characterization of the native disulfide isomers of the novel chi-conotoxin PnID: implications for further increasing conotoxin diversity.</title>
        <authorList>
            <person name="Espiritu M.J."/>
            <person name="Taylor J.K."/>
            <person name="Sugai C.K."/>
            <person name="Thapa P."/>
            <person name="Loening N.M."/>
            <person name="Gusman E."/>
            <person name="Baoanan Z.G."/>
            <person name="Baumann M.H."/>
            <person name="Bingham J.P."/>
        </authorList>
    </citation>
    <scope>INEFFECTIVE AS DRUG</scope>
</reference>
<protein>
    <recommendedName>
        <fullName evidence="20">Chi-conotoxin MrIA</fullName>
        <shortName evidence="13 15">Chi-MrIA</shortName>
    </recommendedName>
    <alternativeName>
        <fullName evidence="14 16">Chi-conopeptide MrIA</fullName>
    </alternativeName>
    <alternativeName>
        <fullName>Conotoxin MrIA</fullName>
    </alternativeName>
    <alternativeName>
        <fullName evidence="12">Lambda-conotoxin CMrVIB</fullName>
    </alternativeName>
    <alternativeName>
        <fullName>Mr10.1</fullName>
    </alternativeName>
    <alternativeName>
        <fullName evidence="17 18 19">Xen2174</fullName>
    </alternativeName>
    <alternativeName>
        <fullName evidence="11">mr10a</fullName>
    </alternativeName>
</protein>
<dbReference type="EMBL" id="DQ141145">
    <property type="protein sequence ID" value="AAZ85410.1"/>
    <property type="molecule type" value="mRNA"/>
</dbReference>
<dbReference type="EMBL" id="FJ959112">
    <property type="protein sequence ID" value="ADB93082.1"/>
    <property type="molecule type" value="Genomic_DNA"/>
</dbReference>
<dbReference type="EMBL" id="GQ981407">
    <property type="protein sequence ID" value="ADN79126.1"/>
    <property type="molecule type" value="mRNA"/>
</dbReference>
<dbReference type="PDB" id="2EW4">
    <property type="method" value="NMR"/>
    <property type="chains" value="A=49-61"/>
</dbReference>
<dbReference type="PDB" id="2J15">
    <property type="method" value="NMR"/>
    <property type="chains" value="A=49-61"/>
</dbReference>
<dbReference type="PDBsum" id="2EW4"/>
<dbReference type="PDBsum" id="2J15"/>
<dbReference type="SMR" id="P58808"/>
<dbReference type="TCDB" id="8.B.4.1.14">
    <property type="family name" value="the conotoxin t (conotoxin t) family"/>
</dbReference>
<dbReference type="ConoServer" id="1739">
    <property type="toxin name" value="MrIA precursor"/>
</dbReference>
<dbReference type="EvolutionaryTrace" id="P58808"/>
<dbReference type="GO" id="GO:0005576">
    <property type="term" value="C:extracellular region"/>
    <property type="evidence" value="ECO:0007669"/>
    <property type="project" value="UniProtKB-SubCell"/>
</dbReference>
<dbReference type="GO" id="GO:0090729">
    <property type="term" value="F:toxin activity"/>
    <property type="evidence" value="ECO:0007669"/>
    <property type="project" value="UniProtKB-KW"/>
</dbReference>
<dbReference type="InterPro" id="IPR031565">
    <property type="entry name" value="T-conotoxin"/>
</dbReference>
<dbReference type="Pfam" id="PF16981">
    <property type="entry name" value="Chi-conotoxin"/>
    <property type="match status" value="1"/>
</dbReference>
<evidence type="ECO:0000255" key="1"/>
<evidence type="ECO:0000269" key="2">
    <source>
    </source>
</evidence>
<evidence type="ECO:0000269" key="3">
    <source>
    </source>
</evidence>
<evidence type="ECO:0000269" key="4">
    <source>
    </source>
</evidence>
<evidence type="ECO:0000269" key="5">
    <source>
    </source>
</evidence>
<evidence type="ECO:0000269" key="6">
    <source>
    </source>
</evidence>
<evidence type="ECO:0000269" key="7">
    <source>
    </source>
</evidence>
<evidence type="ECO:0000269" key="8">
    <source>
    </source>
</evidence>
<evidence type="ECO:0000269" key="9">
    <source>
    </source>
</evidence>
<evidence type="ECO:0000269" key="10">
    <source>
    </source>
</evidence>
<evidence type="ECO:0000303" key="11">
    <source>
    </source>
</evidence>
<evidence type="ECO:0000303" key="12">
    <source>
    </source>
</evidence>
<evidence type="ECO:0000303" key="13">
    <source>
    </source>
</evidence>
<evidence type="ECO:0000303" key="14">
    <source>
    </source>
</evidence>
<evidence type="ECO:0000303" key="15">
    <source>
    </source>
</evidence>
<evidence type="ECO:0000303" key="16">
    <source>
    </source>
</evidence>
<evidence type="ECO:0000303" key="17">
    <source>
    </source>
</evidence>
<evidence type="ECO:0000303" key="18">
    <source>
    </source>
</evidence>
<evidence type="ECO:0000303" key="19">
    <source>
    </source>
</evidence>
<evidence type="ECO:0000305" key="20"/>
<evidence type="ECO:0000305" key="21">
    <source>
    </source>
</evidence>
<evidence type="ECO:0000305" key="22">
    <source>
    </source>
</evidence>
<evidence type="ECO:0000305" key="23">
    <source>
    </source>
</evidence>
<evidence type="ECO:0000305" key="24">
    <source>
    </source>
</evidence>
<evidence type="ECO:0000312" key="25">
    <source>
        <dbReference type="PDB" id="2EW4"/>
    </source>
</evidence>
<evidence type="ECO:0007744" key="26">
    <source>
        <dbReference type="PDB" id="2EW4"/>
    </source>
</evidence>
<evidence type="ECO:0007744" key="27">
    <source>
        <dbReference type="PDB" id="2J15"/>
    </source>
</evidence>
<evidence type="ECO:0007829" key="28">
    <source>
        <dbReference type="PDB" id="2EW4"/>
    </source>
</evidence>
<organism>
    <name type="scientific">Conus marmoreus</name>
    <name type="common">Marble cone</name>
    <dbReference type="NCBI Taxonomy" id="42752"/>
    <lineage>
        <taxon>Eukaryota</taxon>
        <taxon>Metazoa</taxon>
        <taxon>Spiralia</taxon>
        <taxon>Lophotrochozoa</taxon>
        <taxon>Mollusca</taxon>
        <taxon>Gastropoda</taxon>
        <taxon>Caenogastropoda</taxon>
        <taxon>Neogastropoda</taxon>
        <taxon>Conoidea</taxon>
        <taxon>Conidae</taxon>
        <taxon>Conus</taxon>
    </lineage>
</organism>
<proteinExistence type="evidence at protein level"/>
<feature type="signal peptide" evidence="1">
    <location>
        <begin position="1"/>
        <end position="19"/>
    </location>
</feature>
<feature type="propeptide" id="PRO_0000035081" evidence="2 3 4">
    <location>
        <begin position="20"/>
        <end position="48"/>
    </location>
</feature>
<feature type="peptide" id="PRO_0000035082" description="Chi-conotoxin MrIA" evidence="2 3 4">
    <location>
        <begin position="49"/>
        <end position="61"/>
    </location>
</feature>
<feature type="modified residue" description="4-hydroxyproline" evidence="7">
    <location>
        <position position="60"/>
    </location>
</feature>
<feature type="disulfide bond" evidence="7 26 27">
    <location>
        <begin position="52"/>
        <end position="61"/>
    </location>
</feature>
<feature type="disulfide bond" evidence="7 26 27">
    <location>
        <begin position="53"/>
        <end position="58"/>
    </location>
</feature>
<feature type="strand" evidence="28">
    <location>
        <begin position="51"/>
        <end position="53"/>
    </location>
</feature>
<feature type="strand" evidence="28">
    <location>
        <begin position="58"/>
        <end position="60"/>
    </location>
</feature>